<accession>A3QHI2</accession>
<proteinExistence type="inferred from homology"/>
<feature type="chain" id="PRO_1000047702" description="Aminomethyltransferase">
    <location>
        <begin position="1"/>
        <end position="364"/>
    </location>
</feature>
<evidence type="ECO:0000255" key="1">
    <source>
        <dbReference type="HAMAP-Rule" id="MF_00259"/>
    </source>
</evidence>
<name>GCST_SHELP</name>
<keyword id="KW-0032">Aminotransferase</keyword>
<keyword id="KW-1185">Reference proteome</keyword>
<keyword id="KW-0808">Transferase</keyword>
<organism>
    <name type="scientific">Shewanella loihica (strain ATCC BAA-1088 / PV-4)</name>
    <dbReference type="NCBI Taxonomy" id="323850"/>
    <lineage>
        <taxon>Bacteria</taxon>
        <taxon>Pseudomonadati</taxon>
        <taxon>Pseudomonadota</taxon>
        <taxon>Gammaproteobacteria</taxon>
        <taxon>Alteromonadales</taxon>
        <taxon>Shewanellaceae</taxon>
        <taxon>Shewanella</taxon>
    </lineage>
</organism>
<comment type="function">
    <text evidence="1">The glycine cleavage system catalyzes the degradation of glycine.</text>
</comment>
<comment type="catalytic activity">
    <reaction evidence="1">
        <text>N(6)-[(R)-S(8)-aminomethyldihydrolipoyl]-L-lysyl-[protein] + (6S)-5,6,7,8-tetrahydrofolate = N(6)-[(R)-dihydrolipoyl]-L-lysyl-[protein] + (6R)-5,10-methylene-5,6,7,8-tetrahydrofolate + NH4(+)</text>
        <dbReference type="Rhea" id="RHEA:16945"/>
        <dbReference type="Rhea" id="RHEA-COMP:10475"/>
        <dbReference type="Rhea" id="RHEA-COMP:10492"/>
        <dbReference type="ChEBI" id="CHEBI:15636"/>
        <dbReference type="ChEBI" id="CHEBI:28938"/>
        <dbReference type="ChEBI" id="CHEBI:57453"/>
        <dbReference type="ChEBI" id="CHEBI:83100"/>
        <dbReference type="ChEBI" id="CHEBI:83143"/>
        <dbReference type="EC" id="2.1.2.10"/>
    </reaction>
</comment>
<comment type="subunit">
    <text evidence="1">The glycine cleavage system is composed of four proteins: P, T, L and H.</text>
</comment>
<comment type="similarity">
    <text evidence="1">Belongs to the GcvT family.</text>
</comment>
<dbReference type="EC" id="2.1.2.10" evidence="1"/>
<dbReference type="EMBL" id="CP000606">
    <property type="protein sequence ID" value="ABO24930.1"/>
    <property type="molecule type" value="Genomic_DNA"/>
</dbReference>
<dbReference type="RefSeq" id="WP_011866860.1">
    <property type="nucleotide sequence ID" value="NC_009092.1"/>
</dbReference>
<dbReference type="SMR" id="A3QHI2"/>
<dbReference type="STRING" id="323850.Shew_3064"/>
<dbReference type="KEGG" id="slo:Shew_3064"/>
<dbReference type="eggNOG" id="COG0404">
    <property type="taxonomic scope" value="Bacteria"/>
</dbReference>
<dbReference type="HOGENOM" id="CLU_007884_10_2_6"/>
<dbReference type="OrthoDB" id="9774591at2"/>
<dbReference type="Proteomes" id="UP000001558">
    <property type="component" value="Chromosome"/>
</dbReference>
<dbReference type="GO" id="GO:0005829">
    <property type="term" value="C:cytosol"/>
    <property type="evidence" value="ECO:0007669"/>
    <property type="project" value="TreeGrafter"/>
</dbReference>
<dbReference type="GO" id="GO:0005960">
    <property type="term" value="C:glycine cleavage complex"/>
    <property type="evidence" value="ECO:0007669"/>
    <property type="project" value="InterPro"/>
</dbReference>
<dbReference type="GO" id="GO:0004047">
    <property type="term" value="F:aminomethyltransferase activity"/>
    <property type="evidence" value="ECO:0007669"/>
    <property type="project" value="UniProtKB-UniRule"/>
</dbReference>
<dbReference type="GO" id="GO:0008483">
    <property type="term" value="F:transaminase activity"/>
    <property type="evidence" value="ECO:0007669"/>
    <property type="project" value="UniProtKB-KW"/>
</dbReference>
<dbReference type="GO" id="GO:0019464">
    <property type="term" value="P:glycine decarboxylation via glycine cleavage system"/>
    <property type="evidence" value="ECO:0007669"/>
    <property type="project" value="UniProtKB-UniRule"/>
</dbReference>
<dbReference type="FunFam" id="2.40.30.110:FF:000001">
    <property type="entry name" value="Aminomethyltransferase"/>
    <property type="match status" value="1"/>
</dbReference>
<dbReference type="FunFam" id="3.30.70.1400:FF:000001">
    <property type="entry name" value="Aminomethyltransferase"/>
    <property type="match status" value="1"/>
</dbReference>
<dbReference type="FunFam" id="4.10.1250.10:FF:000001">
    <property type="entry name" value="Aminomethyltransferase"/>
    <property type="match status" value="1"/>
</dbReference>
<dbReference type="Gene3D" id="2.40.30.110">
    <property type="entry name" value="Aminomethyltransferase beta-barrel domains"/>
    <property type="match status" value="1"/>
</dbReference>
<dbReference type="Gene3D" id="3.30.70.1400">
    <property type="entry name" value="Aminomethyltransferase beta-barrel domains"/>
    <property type="match status" value="1"/>
</dbReference>
<dbReference type="Gene3D" id="4.10.1250.10">
    <property type="entry name" value="Aminomethyltransferase fragment"/>
    <property type="match status" value="1"/>
</dbReference>
<dbReference type="Gene3D" id="3.30.1360.120">
    <property type="entry name" value="Probable tRNA modification gtpase trme, domain 1"/>
    <property type="match status" value="1"/>
</dbReference>
<dbReference type="HAMAP" id="MF_00259">
    <property type="entry name" value="GcvT"/>
    <property type="match status" value="1"/>
</dbReference>
<dbReference type="InterPro" id="IPR006223">
    <property type="entry name" value="GCS_T"/>
</dbReference>
<dbReference type="InterPro" id="IPR022903">
    <property type="entry name" value="GCS_T_bac"/>
</dbReference>
<dbReference type="InterPro" id="IPR013977">
    <property type="entry name" value="GCST_C"/>
</dbReference>
<dbReference type="InterPro" id="IPR006222">
    <property type="entry name" value="GCV_T_N"/>
</dbReference>
<dbReference type="InterPro" id="IPR028896">
    <property type="entry name" value="GcvT/YgfZ/DmdA"/>
</dbReference>
<dbReference type="InterPro" id="IPR029043">
    <property type="entry name" value="GcvT/YgfZ_C"/>
</dbReference>
<dbReference type="InterPro" id="IPR027266">
    <property type="entry name" value="TrmE/GcvT_dom1"/>
</dbReference>
<dbReference type="NCBIfam" id="TIGR00528">
    <property type="entry name" value="gcvT"/>
    <property type="match status" value="1"/>
</dbReference>
<dbReference type="NCBIfam" id="NF001567">
    <property type="entry name" value="PRK00389.1"/>
    <property type="match status" value="1"/>
</dbReference>
<dbReference type="PANTHER" id="PTHR43757">
    <property type="entry name" value="AMINOMETHYLTRANSFERASE"/>
    <property type="match status" value="1"/>
</dbReference>
<dbReference type="PANTHER" id="PTHR43757:SF2">
    <property type="entry name" value="AMINOMETHYLTRANSFERASE, MITOCHONDRIAL"/>
    <property type="match status" value="1"/>
</dbReference>
<dbReference type="Pfam" id="PF01571">
    <property type="entry name" value="GCV_T"/>
    <property type="match status" value="1"/>
</dbReference>
<dbReference type="Pfam" id="PF08669">
    <property type="entry name" value="GCV_T_C"/>
    <property type="match status" value="1"/>
</dbReference>
<dbReference type="PIRSF" id="PIRSF006487">
    <property type="entry name" value="GcvT"/>
    <property type="match status" value="1"/>
</dbReference>
<dbReference type="SUPFAM" id="SSF101790">
    <property type="entry name" value="Aminomethyltransferase beta-barrel domain"/>
    <property type="match status" value="1"/>
</dbReference>
<dbReference type="SUPFAM" id="SSF103025">
    <property type="entry name" value="Folate-binding domain"/>
    <property type="match status" value="1"/>
</dbReference>
<protein>
    <recommendedName>
        <fullName evidence="1">Aminomethyltransferase</fullName>
        <ecNumber evidence="1">2.1.2.10</ecNumber>
    </recommendedName>
    <alternativeName>
        <fullName evidence="1">Glycine cleavage system T protein</fullName>
    </alternativeName>
</protein>
<reference key="1">
    <citation type="submission" date="2007-03" db="EMBL/GenBank/DDBJ databases">
        <title>Complete sequence of Shewanella loihica PV-4.</title>
        <authorList>
            <consortium name="US DOE Joint Genome Institute"/>
            <person name="Copeland A."/>
            <person name="Lucas S."/>
            <person name="Lapidus A."/>
            <person name="Barry K."/>
            <person name="Detter J.C."/>
            <person name="Glavina del Rio T."/>
            <person name="Hammon N."/>
            <person name="Israni S."/>
            <person name="Dalin E."/>
            <person name="Tice H."/>
            <person name="Pitluck S."/>
            <person name="Chain P."/>
            <person name="Malfatti S."/>
            <person name="Shin M."/>
            <person name="Vergez L."/>
            <person name="Schmutz J."/>
            <person name="Larimer F."/>
            <person name="Land M."/>
            <person name="Hauser L."/>
            <person name="Kyrpides N."/>
            <person name="Mikhailova N."/>
            <person name="Romine M.F."/>
            <person name="Serres G."/>
            <person name="Fredrickson J."/>
            <person name="Tiedje J."/>
            <person name="Richardson P."/>
        </authorList>
    </citation>
    <scope>NUCLEOTIDE SEQUENCE [LARGE SCALE GENOMIC DNA]</scope>
    <source>
        <strain>ATCC BAA-1088 / PV-4</strain>
    </source>
</reference>
<sequence length="364" mass="39438">MANKTVLFNKHLEANAKMVDFHGWDMPLNYGSQIEEHHVVRQDAGMFDVSHMTVVDVTGAEACDFLRKLLANDVAKLKVPGKALYGGMLDHNAGVIDDLITYYLSDTHYRIVVNSATREKDLAWITEQVKGYDVTVTERPELAMIAVQGPNAKAKAAAVFTDEQNAAVEGMKPFFGVQSGSLFIATTGYTGEAGYEIIVPEAEAEALWQALLDNGVKPCGLGARDTLRLEAGMNLYGQDMDESVNPLAANMGWTIAWEPEDRDFIGREALAAIKAAGTDKLVGLVMEAKGVLRTGMPVFFTDADGVEQQGAITSGTFSPTLGYSIAMARVPNSVGDVAEVEMRKKRVPVKVIAPSFVRNGKQAF</sequence>
<gene>
    <name evidence="1" type="primary">gcvT</name>
    <name type="ordered locus">Shew_3064</name>
</gene>